<sequence length="166" mass="18001">MSEETGAADTLTNGEDHLPQVALIAQYVKDLSFENPSAPGIYQAPEQPKIDVQFNIGSQQAGEDVYEVALKIEIKATQGDLTAYAVELVYAGLFGIRNVPEEHLPPFLLAEAPRLLFPFARRVAADAIRDGNFPSLVLEPIDFGALYMQQAEQQTALAESQPAGEA</sequence>
<reference key="1">
    <citation type="journal article" date="2010" name="J. Bacteriol.">
        <title>Genome sequence of the dioxin-mineralizing bacterium Sphingomonas wittichii RW1.</title>
        <authorList>
            <person name="Miller T.R."/>
            <person name="Delcher A.L."/>
            <person name="Salzberg S.L."/>
            <person name="Saunders E."/>
            <person name="Detter J.C."/>
            <person name="Halden R.U."/>
        </authorList>
    </citation>
    <scope>NUCLEOTIDE SEQUENCE [LARGE SCALE GENOMIC DNA]</scope>
    <source>
        <strain>DSM 6014 / CCUG 31198 / JCM 15750 / NBRC 105917 / EY 4224 / RW1</strain>
    </source>
</reference>
<organism>
    <name type="scientific">Rhizorhabdus wittichii (strain DSM 6014 / CCUG 31198 / JCM 15750 / NBRC 105917 / EY 4224 / RW1)</name>
    <name type="common">Sphingomonas wittichii</name>
    <dbReference type="NCBI Taxonomy" id="392499"/>
    <lineage>
        <taxon>Bacteria</taxon>
        <taxon>Pseudomonadati</taxon>
        <taxon>Pseudomonadota</taxon>
        <taxon>Alphaproteobacteria</taxon>
        <taxon>Sphingomonadales</taxon>
        <taxon>Sphingomonadaceae</taxon>
        <taxon>Rhizorhabdus</taxon>
    </lineage>
</organism>
<feature type="chain" id="PRO_0000318266" description="Protein-export protein SecB">
    <location>
        <begin position="1"/>
        <end position="166"/>
    </location>
</feature>
<name>SECB_RHIWR</name>
<keyword id="KW-0143">Chaperone</keyword>
<keyword id="KW-0963">Cytoplasm</keyword>
<keyword id="KW-0653">Protein transport</keyword>
<keyword id="KW-1185">Reference proteome</keyword>
<keyword id="KW-0811">Translocation</keyword>
<keyword id="KW-0813">Transport</keyword>
<comment type="function">
    <text evidence="1">One of the proteins required for the normal export of preproteins out of the cell cytoplasm. It is a molecular chaperone that binds to a subset of precursor proteins, maintaining them in a translocation-competent state. It also specifically binds to its receptor SecA.</text>
</comment>
<comment type="subunit">
    <text evidence="1">Homotetramer, a dimer of dimers. One homotetramer interacts with 1 SecA dimer.</text>
</comment>
<comment type="subcellular location">
    <subcellularLocation>
        <location evidence="1">Cytoplasm</location>
    </subcellularLocation>
</comment>
<comment type="similarity">
    <text evidence="1">Belongs to the SecB family.</text>
</comment>
<comment type="sequence caution" evidence="2">
    <conflict type="erroneous initiation">
        <sequence resource="EMBL-CDS" id="ABQ70174"/>
    </conflict>
</comment>
<accession>A5VD08</accession>
<evidence type="ECO:0000255" key="1">
    <source>
        <dbReference type="HAMAP-Rule" id="MF_00821"/>
    </source>
</evidence>
<evidence type="ECO:0000305" key="2"/>
<gene>
    <name evidence="1" type="primary">secB</name>
    <name type="ordered locus">Swit_3829</name>
</gene>
<protein>
    <recommendedName>
        <fullName evidence="1">Protein-export protein SecB</fullName>
    </recommendedName>
</protein>
<dbReference type="EMBL" id="CP000699">
    <property type="protein sequence ID" value="ABQ70174.1"/>
    <property type="status" value="ALT_INIT"/>
    <property type="molecule type" value="Genomic_DNA"/>
</dbReference>
<dbReference type="SMR" id="A5VD08"/>
<dbReference type="STRING" id="392499.Swit_3829"/>
<dbReference type="PaxDb" id="392499-Swit_3829"/>
<dbReference type="KEGG" id="swi:Swit_3829"/>
<dbReference type="eggNOG" id="COG1952">
    <property type="taxonomic scope" value="Bacteria"/>
</dbReference>
<dbReference type="HOGENOM" id="CLU_111574_0_0_5"/>
<dbReference type="OrthoDB" id="9795145at2"/>
<dbReference type="Proteomes" id="UP000001989">
    <property type="component" value="Chromosome"/>
</dbReference>
<dbReference type="GO" id="GO:0005737">
    <property type="term" value="C:cytoplasm"/>
    <property type="evidence" value="ECO:0007669"/>
    <property type="project" value="UniProtKB-SubCell"/>
</dbReference>
<dbReference type="GO" id="GO:0051082">
    <property type="term" value="F:unfolded protein binding"/>
    <property type="evidence" value="ECO:0007669"/>
    <property type="project" value="InterPro"/>
</dbReference>
<dbReference type="GO" id="GO:0006457">
    <property type="term" value="P:protein folding"/>
    <property type="evidence" value="ECO:0007669"/>
    <property type="project" value="UniProtKB-UniRule"/>
</dbReference>
<dbReference type="GO" id="GO:0051262">
    <property type="term" value="P:protein tetramerization"/>
    <property type="evidence" value="ECO:0007669"/>
    <property type="project" value="InterPro"/>
</dbReference>
<dbReference type="GO" id="GO:0015031">
    <property type="term" value="P:protein transport"/>
    <property type="evidence" value="ECO:0007669"/>
    <property type="project" value="UniProtKB-UniRule"/>
</dbReference>
<dbReference type="Gene3D" id="3.10.420.10">
    <property type="entry name" value="SecB-like"/>
    <property type="match status" value="1"/>
</dbReference>
<dbReference type="HAMAP" id="MF_00821">
    <property type="entry name" value="SecB"/>
    <property type="match status" value="1"/>
</dbReference>
<dbReference type="InterPro" id="IPR003708">
    <property type="entry name" value="SecB"/>
</dbReference>
<dbReference type="InterPro" id="IPR035958">
    <property type="entry name" value="SecB-like_sf"/>
</dbReference>
<dbReference type="NCBIfam" id="NF004392">
    <property type="entry name" value="PRK05751.1-3"/>
    <property type="match status" value="1"/>
</dbReference>
<dbReference type="NCBIfam" id="TIGR00809">
    <property type="entry name" value="secB"/>
    <property type="match status" value="1"/>
</dbReference>
<dbReference type="PANTHER" id="PTHR36918">
    <property type="match status" value="1"/>
</dbReference>
<dbReference type="PANTHER" id="PTHR36918:SF1">
    <property type="entry name" value="PROTEIN-EXPORT PROTEIN SECB"/>
    <property type="match status" value="1"/>
</dbReference>
<dbReference type="Pfam" id="PF02556">
    <property type="entry name" value="SecB"/>
    <property type="match status" value="1"/>
</dbReference>
<dbReference type="PRINTS" id="PR01594">
    <property type="entry name" value="SECBCHAPRONE"/>
</dbReference>
<dbReference type="SUPFAM" id="SSF54611">
    <property type="entry name" value="SecB-like"/>
    <property type="match status" value="1"/>
</dbReference>
<proteinExistence type="inferred from homology"/>